<dbReference type="EC" id="6.3.2.8" evidence="1"/>
<dbReference type="EMBL" id="CR954246">
    <property type="protein sequence ID" value="CAI87551.1"/>
    <property type="status" value="ALT_INIT"/>
    <property type="molecule type" value="Genomic_DNA"/>
</dbReference>
<dbReference type="SMR" id="Q3IFY1"/>
<dbReference type="STRING" id="326442.PSHAa2503"/>
<dbReference type="KEGG" id="pha:PSHAa2503"/>
<dbReference type="PATRIC" id="fig|326442.8.peg.2413"/>
<dbReference type="eggNOG" id="COG0773">
    <property type="taxonomic scope" value="Bacteria"/>
</dbReference>
<dbReference type="HOGENOM" id="CLU_028104_2_2_6"/>
<dbReference type="BioCyc" id="PHAL326442:PSHA_RS12325-MONOMER"/>
<dbReference type="UniPathway" id="UPA00219"/>
<dbReference type="Proteomes" id="UP000006843">
    <property type="component" value="Chromosome I"/>
</dbReference>
<dbReference type="GO" id="GO:0005737">
    <property type="term" value="C:cytoplasm"/>
    <property type="evidence" value="ECO:0007669"/>
    <property type="project" value="UniProtKB-SubCell"/>
</dbReference>
<dbReference type="GO" id="GO:0005524">
    <property type="term" value="F:ATP binding"/>
    <property type="evidence" value="ECO:0007669"/>
    <property type="project" value="UniProtKB-UniRule"/>
</dbReference>
<dbReference type="GO" id="GO:0008763">
    <property type="term" value="F:UDP-N-acetylmuramate-L-alanine ligase activity"/>
    <property type="evidence" value="ECO:0007669"/>
    <property type="project" value="UniProtKB-UniRule"/>
</dbReference>
<dbReference type="GO" id="GO:0051301">
    <property type="term" value="P:cell division"/>
    <property type="evidence" value="ECO:0007669"/>
    <property type="project" value="UniProtKB-KW"/>
</dbReference>
<dbReference type="GO" id="GO:0071555">
    <property type="term" value="P:cell wall organization"/>
    <property type="evidence" value="ECO:0007669"/>
    <property type="project" value="UniProtKB-KW"/>
</dbReference>
<dbReference type="GO" id="GO:0009252">
    <property type="term" value="P:peptidoglycan biosynthetic process"/>
    <property type="evidence" value="ECO:0007669"/>
    <property type="project" value="UniProtKB-UniRule"/>
</dbReference>
<dbReference type="GO" id="GO:0008360">
    <property type="term" value="P:regulation of cell shape"/>
    <property type="evidence" value="ECO:0007669"/>
    <property type="project" value="UniProtKB-KW"/>
</dbReference>
<dbReference type="FunFam" id="3.40.1190.10:FF:000001">
    <property type="entry name" value="UDP-N-acetylmuramate--L-alanine ligase"/>
    <property type="match status" value="1"/>
</dbReference>
<dbReference type="Gene3D" id="3.90.190.20">
    <property type="entry name" value="Mur ligase, C-terminal domain"/>
    <property type="match status" value="1"/>
</dbReference>
<dbReference type="Gene3D" id="3.40.1190.10">
    <property type="entry name" value="Mur-like, catalytic domain"/>
    <property type="match status" value="1"/>
</dbReference>
<dbReference type="Gene3D" id="3.40.50.720">
    <property type="entry name" value="NAD(P)-binding Rossmann-like Domain"/>
    <property type="match status" value="1"/>
</dbReference>
<dbReference type="HAMAP" id="MF_00046">
    <property type="entry name" value="MurC"/>
    <property type="match status" value="1"/>
</dbReference>
<dbReference type="InterPro" id="IPR036565">
    <property type="entry name" value="Mur-like_cat_sf"/>
</dbReference>
<dbReference type="InterPro" id="IPR004101">
    <property type="entry name" value="Mur_ligase_C"/>
</dbReference>
<dbReference type="InterPro" id="IPR036615">
    <property type="entry name" value="Mur_ligase_C_dom_sf"/>
</dbReference>
<dbReference type="InterPro" id="IPR013221">
    <property type="entry name" value="Mur_ligase_cen"/>
</dbReference>
<dbReference type="InterPro" id="IPR000713">
    <property type="entry name" value="Mur_ligase_N"/>
</dbReference>
<dbReference type="InterPro" id="IPR050061">
    <property type="entry name" value="MurCDEF_pg_biosynth"/>
</dbReference>
<dbReference type="InterPro" id="IPR005758">
    <property type="entry name" value="UDP-N-AcMur_Ala_ligase_MurC"/>
</dbReference>
<dbReference type="NCBIfam" id="TIGR01082">
    <property type="entry name" value="murC"/>
    <property type="match status" value="1"/>
</dbReference>
<dbReference type="PANTHER" id="PTHR43445:SF3">
    <property type="entry name" value="UDP-N-ACETYLMURAMATE--L-ALANINE LIGASE"/>
    <property type="match status" value="1"/>
</dbReference>
<dbReference type="PANTHER" id="PTHR43445">
    <property type="entry name" value="UDP-N-ACETYLMURAMATE--L-ALANINE LIGASE-RELATED"/>
    <property type="match status" value="1"/>
</dbReference>
<dbReference type="Pfam" id="PF01225">
    <property type="entry name" value="Mur_ligase"/>
    <property type="match status" value="1"/>
</dbReference>
<dbReference type="Pfam" id="PF02875">
    <property type="entry name" value="Mur_ligase_C"/>
    <property type="match status" value="1"/>
</dbReference>
<dbReference type="Pfam" id="PF08245">
    <property type="entry name" value="Mur_ligase_M"/>
    <property type="match status" value="1"/>
</dbReference>
<dbReference type="SUPFAM" id="SSF51984">
    <property type="entry name" value="MurCD N-terminal domain"/>
    <property type="match status" value="1"/>
</dbReference>
<dbReference type="SUPFAM" id="SSF53623">
    <property type="entry name" value="MurD-like peptide ligases, catalytic domain"/>
    <property type="match status" value="1"/>
</dbReference>
<dbReference type="SUPFAM" id="SSF53244">
    <property type="entry name" value="MurD-like peptide ligases, peptide-binding domain"/>
    <property type="match status" value="1"/>
</dbReference>
<name>MURC_PSET1</name>
<accession>Q3IFY1</accession>
<reference key="1">
    <citation type="journal article" date="2005" name="Genome Res.">
        <title>Coping with cold: the genome of the versatile marine Antarctica bacterium Pseudoalteromonas haloplanktis TAC125.</title>
        <authorList>
            <person name="Medigue C."/>
            <person name="Krin E."/>
            <person name="Pascal G."/>
            <person name="Barbe V."/>
            <person name="Bernsel A."/>
            <person name="Bertin P.N."/>
            <person name="Cheung F."/>
            <person name="Cruveiller S."/>
            <person name="D'Amico S."/>
            <person name="Duilio A."/>
            <person name="Fang G."/>
            <person name="Feller G."/>
            <person name="Ho C."/>
            <person name="Mangenot S."/>
            <person name="Marino G."/>
            <person name="Nilsson J."/>
            <person name="Parrilli E."/>
            <person name="Rocha E.P.C."/>
            <person name="Rouy Z."/>
            <person name="Sekowska A."/>
            <person name="Tutino M.L."/>
            <person name="Vallenet D."/>
            <person name="von Heijne G."/>
            <person name="Danchin A."/>
        </authorList>
    </citation>
    <scope>NUCLEOTIDE SEQUENCE [LARGE SCALE GENOMIC DNA]</scope>
    <source>
        <strain>TAC 125</strain>
    </source>
</reference>
<proteinExistence type="inferred from homology"/>
<organism>
    <name type="scientific">Pseudoalteromonas translucida (strain TAC 125)</name>
    <dbReference type="NCBI Taxonomy" id="326442"/>
    <lineage>
        <taxon>Bacteria</taxon>
        <taxon>Pseudomonadati</taxon>
        <taxon>Pseudomonadota</taxon>
        <taxon>Gammaproteobacteria</taxon>
        <taxon>Alteromonadales</taxon>
        <taxon>Pseudoalteromonadaceae</taxon>
        <taxon>Pseudoalteromonas</taxon>
    </lineage>
</organism>
<gene>
    <name evidence="1" type="primary">murC</name>
    <name type="ordered locus">PSHAa2503</name>
</gene>
<sequence>MKQTSIREQYTRPAMRRIETIHFVGIGGAGMGGIAEVLAFEGYRITGSDIAHSAMTDRLIKAGAEVFIGHHENNVKDANVVVVSSAIDETNPEIIAAKAARVPVVRRAEMLAELMRFRHGIAIAGTHGKTTTTSLIASIYAQAGLDPTFIIGGLLNSAGSNAKVGKSDFLIAEADESDASFLHLQPMVSVITNIEEDHMETYGGSLEKMKDTYVDFIHNLPFYGLAVVCIDSEVASELIPRFGRPVITYGESSDADYRMSDFSQSANTCKFTVTNKQGESLTATLNMPGKHNALNATAAIAVAKDQNIANFAILEALQKFEGIGRRFQHYGEFENERGSVMLVDDYGHHPSEVAATITAAREGWPDKRLVMVYQPHRFTRTRDLYEDFVKVLAEVDQLLLLDVYSAGEEPIVGADSKSLCRSLRQRGKEPRHVANSAELASVLADCLQNNDLVLTQGAGNIGQLVKTLAATGMSIEKLKQGEV</sequence>
<comment type="function">
    <text evidence="1">Cell wall formation.</text>
</comment>
<comment type="catalytic activity">
    <reaction evidence="1">
        <text>UDP-N-acetyl-alpha-D-muramate + L-alanine + ATP = UDP-N-acetyl-alpha-D-muramoyl-L-alanine + ADP + phosphate + H(+)</text>
        <dbReference type="Rhea" id="RHEA:23372"/>
        <dbReference type="ChEBI" id="CHEBI:15378"/>
        <dbReference type="ChEBI" id="CHEBI:30616"/>
        <dbReference type="ChEBI" id="CHEBI:43474"/>
        <dbReference type="ChEBI" id="CHEBI:57972"/>
        <dbReference type="ChEBI" id="CHEBI:70757"/>
        <dbReference type="ChEBI" id="CHEBI:83898"/>
        <dbReference type="ChEBI" id="CHEBI:456216"/>
        <dbReference type="EC" id="6.3.2.8"/>
    </reaction>
</comment>
<comment type="pathway">
    <text evidence="1">Cell wall biogenesis; peptidoglycan biosynthesis.</text>
</comment>
<comment type="subcellular location">
    <subcellularLocation>
        <location evidence="1">Cytoplasm</location>
    </subcellularLocation>
</comment>
<comment type="similarity">
    <text evidence="1">Belongs to the MurCDEF family.</text>
</comment>
<comment type="sequence caution" evidence="2">
    <conflict type="erroneous initiation">
        <sequence resource="EMBL-CDS" id="CAI87551"/>
    </conflict>
</comment>
<keyword id="KW-0067">ATP-binding</keyword>
<keyword id="KW-0131">Cell cycle</keyword>
<keyword id="KW-0132">Cell division</keyword>
<keyword id="KW-0133">Cell shape</keyword>
<keyword id="KW-0961">Cell wall biogenesis/degradation</keyword>
<keyword id="KW-0963">Cytoplasm</keyword>
<keyword id="KW-0436">Ligase</keyword>
<keyword id="KW-0547">Nucleotide-binding</keyword>
<keyword id="KW-0573">Peptidoglycan synthesis</keyword>
<keyword id="KW-1185">Reference proteome</keyword>
<feature type="chain" id="PRO_0000242575" description="UDP-N-acetylmuramate--L-alanine ligase">
    <location>
        <begin position="1"/>
        <end position="483"/>
    </location>
</feature>
<feature type="binding site" evidence="1">
    <location>
        <begin position="125"/>
        <end position="131"/>
    </location>
    <ligand>
        <name>ATP</name>
        <dbReference type="ChEBI" id="CHEBI:30616"/>
    </ligand>
</feature>
<protein>
    <recommendedName>
        <fullName evidence="1">UDP-N-acetylmuramate--L-alanine ligase</fullName>
        <ecNumber evidence="1">6.3.2.8</ecNumber>
    </recommendedName>
    <alternativeName>
        <fullName evidence="1">UDP-N-acetylmuramoyl-L-alanine synthetase</fullName>
    </alternativeName>
</protein>
<evidence type="ECO:0000255" key="1">
    <source>
        <dbReference type="HAMAP-Rule" id="MF_00046"/>
    </source>
</evidence>
<evidence type="ECO:0000305" key="2"/>